<organism>
    <name type="scientific">Microcystis aeruginosa (strain NIES-843 / IAM M-2473)</name>
    <dbReference type="NCBI Taxonomy" id="449447"/>
    <lineage>
        <taxon>Bacteria</taxon>
        <taxon>Bacillati</taxon>
        <taxon>Cyanobacteriota</taxon>
        <taxon>Cyanophyceae</taxon>
        <taxon>Oscillatoriophycideae</taxon>
        <taxon>Chroococcales</taxon>
        <taxon>Microcystaceae</taxon>
        <taxon>Microcystis</taxon>
    </lineage>
</organism>
<sequence>MAILRLENGTTYTQLADISLELAKLNVTLNYWPIENEATRQLLKQASLTDEEKEIVLTSLDGYFEQLKQEAGYQARDLIVLHPEIANLDTLLAKFERCHTHADDEVRYIIDGEGVFGFVFADGSQGELTIQPQEYINVPAHSEHWFHLTASKRVKAVRYFTSTAGWVPEYTETVIRFPSLTAV</sequence>
<dbReference type="EC" id="1.13.11.54" evidence="1"/>
<dbReference type="EC" id="1.13.11.53" evidence="1"/>
<dbReference type="EMBL" id="AP009552">
    <property type="protein sequence ID" value="BAG04457.1"/>
    <property type="molecule type" value="Genomic_DNA"/>
</dbReference>
<dbReference type="RefSeq" id="WP_012267195.1">
    <property type="nucleotide sequence ID" value="NC_010296.1"/>
</dbReference>
<dbReference type="SMR" id="B0JUK9"/>
<dbReference type="STRING" id="449447.MAE_46350"/>
<dbReference type="PaxDb" id="449447-MAE_46350"/>
<dbReference type="EnsemblBacteria" id="BAG04457">
    <property type="protein sequence ID" value="BAG04457"/>
    <property type="gene ID" value="MAE_46350"/>
</dbReference>
<dbReference type="KEGG" id="mar:MAE_46350"/>
<dbReference type="PATRIC" id="fig|449447.4.peg.4215"/>
<dbReference type="eggNOG" id="COG1791">
    <property type="taxonomic scope" value="Bacteria"/>
</dbReference>
<dbReference type="HOGENOM" id="CLU_125400_0_0_3"/>
<dbReference type="BioCyc" id="MAER449447:MAE_RS20110-MONOMER"/>
<dbReference type="UniPathway" id="UPA00904">
    <property type="reaction ID" value="UER00878"/>
</dbReference>
<dbReference type="Proteomes" id="UP000001510">
    <property type="component" value="Chromosome"/>
</dbReference>
<dbReference type="GO" id="GO:0010308">
    <property type="term" value="F:acireductone dioxygenase (Ni2+-requiring) activity"/>
    <property type="evidence" value="ECO:0007669"/>
    <property type="project" value="UniProtKB-UniRule"/>
</dbReference>
<dbReference type="GO" id="GO:0010309">
    <property type="term" value="F:acireductone dioxygenase [iron(II)-requiring] activity"/>
    <property type="evidence" value="ECO:0007669"/>
    <property type="project" value="UniProtKB-UniRule"/>
</dbReference>
<dbReference type="GO" id="GO:0005506">
    <property type="term" value="F:iron ion binding"/>
    <property type="evidence" value="ECO:0007669"/>
    <property type="project" value="UniProtKB-UniRule"/>
</dbReference>
<dbReference type="GO" id="GO:0016151">
    <property type="term" value="F:nickel cation binding"/>
    <property type="evidence" value="ECO:0007669"/>
    <property type="project" value="UniProtKB-UniRule"/>
</dbReference>
<dbReference type="GO" id="GO:0019509">
    <property type="term" value="P:L-methionine salvage from methylthioadenosine"/>
    <property type="evidence" value="ECO:0007669"/>
    <property type="project" value="UniProtKB-UniRule"/>
</dbReference>
<dbReference type="GO" id="GO:0019284">
    <property type="term" value="P:L-methionine salvage from S-adenosylmethionine"/>
    <property type="evidence" value="ECO:0007669"/>
    <property type="project" value="InterPro"/>
</dbReference>
<dbReference type="CDD" id="cd02232">
    <property type="entry name" value="cupin_ARD"/>
    <property type="match status" value="1"/>
</dbReference>
<dbReference type="Gene3D" id="2.60.120.10">
    <property type="entry name" value="Jelly Rolls"/>
    <property type="match status" value="1"/>
</dbReference>
<dbReference type="HAMAP" id="MF_01682">
    <property type="entry name" value="Salvage_MtnD"/>
    <property type="match status" value="1"/>
</dbReference>
<dbReference type="InterPro" id="IPR004313">
    <property type="entry name" value="ARD"/>
</dbReference>
<dbReference type="InterPro" id="IPR023956">
    <property type="entry name" value="ARD_bac"/>
</dbReference>
<dbReference type="InterPro" id="IPR014710">
    <property type="entry name" value="RmlC-like_jellyroll"/>
</dbReference>
<dbReference type="InterPro" id="IPR011051">
    <property type="entry name" value="RmlC_Cupin_sf"/>
</dbReference>
<dbReference type="PANTHER" id="PTHR23418">
    <property type="entry name" value="ACIREDUCTONE DIOXYGENASE"/>
    <property type="match status" value="1"/>
</dbReference>
<dbReference type="PANTHER" id="PTHR23418:SF0">
    <property type="entry name" value="ACIREDUCTONE DIOXYGENASE"/>
    <property type="match status" value="1"/>
</dbReference>
<dbReference type="Pfam" id="PF03079">
    <property type="entry name" value="ARD"/>
    <property type="match status" value="1"/>
</dbReference>
<dbReference type="SUPFAM" id="SSF51182">
    <property type="entry name" value="RmlC-like cupins"/>
    <property type="match status" value="1"/>
</dbReference>
<name>MTND_MICAN</name>
<evidence type="ECO:0000255" key="1">
    <source>
        <dbReference type="HAMAP-Rule" id="MF_01682"/>
    </source>
</evidence>
<proteinExistence type="inferred from homology"/>
<keyword id="KW-0028">Amino-acid biosynthesis</keyword>
<keyword id="KW-0223">Dioxygenase</keyword>
<keyword id="KW-0408">Iron</keyword>
<keyword id="KW-0479">Metal-binding</keyword>
<keyword id="KW-0486">Methionine biosynthesis</keyword>
<keyword id="KW-0533">Nickel</keyword>
<keyword id="KW-0560">Oxidoreductase</keyword>
<feature type="chain" id="PRO_0000359211" description="Acireductone dioxygenase">
    <location>
        <begin position="1"/>
        <end position="183"/>
    </location>
</feature>
<feature type="binding site" evidence="1">
    <location>
        <position position="99"/>
    </location>
    <ligand>
        <name>Fe(2+)</name>
        <dbReference type="ChEBI" id="CHEBI:29033"/>
    </ligand>
</feature>
<feature type="binding site" evidence="1">
    <location>
        <position position="99"/>
    </location>
    <ligand>
        <name>Ni(2+)</name>
        <dbReference type="ChEBI" id="CHEBI:49786"/>
    </ligand>
</feature>
<feature type="binding site" evidence="1">
    <location>
        <position position="101"/>
    </location>
    <ligand>
        <name>Fe(2+)</name>
        <dbReference type="ChEBI" id="CHEBI:29033"/>
    </ligand>
</feature>
<feature type="binding site" evidence="1">
    <location>
        <position position="101"/>
    </location>
    <ligand>
        <name>Ni(2+)</name>
        <dbReference type="ChEBI" id="CHEBI:49786"/>
    </ligand>
</feature>
<feature type="binding site" evidence="1">
    <location>
        <position position="105"/>
    </location>
    <ligand>
        <name>Fe(2+)</name>
        <dbReference type="ChEBI" id="CHEBI:29033"/>
    </ligand>
</feature>
<feature type="binding site" evidence="1">
    <location>
        <position position="105"/>
    </location>
    <ligand>
        <name>Ni(2+)</name>
        <dbReference type="ChEBI" id="CHEBI:49786"/>
    </ligand>
</feature>
<feature type="binding site" evidence="1">
    <location>
        <position position="144"/>
    </location>
    <ligand>
        <name>Fe(2+)</name>
        <dbReference type="ChEBI" id="CHEBI:29033"/>
    </ligand>
</feature>
<feature type="binding site" evidence="1">
    <location>
        <position position="144"/>
    </location>
    <ligand>
        <name>Ni(2+)</name>
        <dbReference type="ChEBI" id="CHEBI:49786"/>
    </ligand>
</feature>
<feature type="site" description="May play a role in transmitting local conformational changes" evidence="1">
    <location>
        <position position="104"/>
    </location>
</feature>
<feature type="site" description="Important to generate the dianion" evidence="1">
    <location>
        <position position="107"/>
    </location>
</feature>
<protein>
    <recommendedName>
        <fullName evidence="1">Acireductone dioxygenase</fullName>
    </recommendedName>
    <alternativeName>
        <fullName evidence="1">1,2-dihydroxy-3-keto-5-methylthiopentene dioxygenase</fullName>
        <shortName evidence="1">DHK-MTPene dioxygenase</shortName>
    </alternativeName>
    <alternativeName>
        <fullName evidence="1">Acireductone dioxygenase (Fe(2+)-requiring)</fullName>
        <shortName evidence="1">ARD'</shortName>
        <shortName evidence="1">Fe-ARD</shortName>
        <ecNumber evidence="1">1.13.11.54</ecNumber>
    </alternativeName>
    <alternativeName>
        <fullName evidence="1">Acireductone dioxygenase (Ni(2+)-requiring)</fullName>
        <shortName evidence="1">ARD</shortName>
        <shortName evidence="1">Ni-ARD</shortName>
        <ecNumber evidence="1">1.13.11.53</ecNumber>
    </alternativeName>
</protein>
<gene>
    <name evidence="1" type="primary">mtnD</name>
    <name type="ordered locus">MAE_46350</name>
</gene>
<reference key="1">
    <citation type="journal article" date="2007" name="DNA Res.">
        <title>Complete genomic structure of the bloom-forming toxic cyanobacterium Microcystis aeruginosa NIES-843.</title>
        <authorList>
            <person name="Kaneko T."/>
            <person name="Nakajima N."/>
            <person name="Okamoto S."/>
            <person name="Suzuki I."/>
            <person name="Tanabe Y."/>
            <person name="Tamaoki M."/>
            <person name="Nakamura Y."/>
            <person name="Kasai F."/>
            <person name="Watanabe A."/>
            <person name="Kawashima K."/>
            <person name="Kishida Y."/>
            <person name="Ono A."/>
            <person name="Shimizu Y."/>
            <person name="Takahashi C."/>
            <person name="Minami C."/>
            <person name="Fujishiro T."/>
            <person name="Kohara M."/>
            <person name="Katoh M."/>
            <person name="Nakazaki N."/>
            <person name="Nakayama S."/>
            <person name="Yamada M."/>
            <person name="Tabata S."/>
            <person name="Watanabe M.M."/>
        </authorList>
    </citation>
    <scope>NUCLEOTIDE SEQUENCE [LARGE SCALE GENOMIC DNA]</scope>
    <source>
        <strain>NIES-843 / IAM M-247</strain>
    </source>
</reference>
<comment type="function">
    <text evidence="1">Catalyzes 2 different reactions between oxygen and the acireductone 1,2-dihydroxy-3-keto-5-methylthiopentene (DHK-MTPene) depending upon the metal bound in the active site. Fe-containing acireductone dioxygenase (Fe-ARD) produces formate and 2-keto-4-methylthiobutyrate (KMTB), the alpha-ketoacid precursor of methionine in the methionine recycle pathway. Ni-containing acireductone dioxygenase (Ni-ARD) produces methylthiopropionate, carbon monoxide and formate, and does not lie on the methionine recycle pathway.</text>
</comment>
<comment type="catalytic activity">
    <reaction evidence="1">
        <text>1,2-dihydroxy-5-(methylsulfanyl)pent-1-en-3-one + O2 = 3-(methylsulfanyl)propanoate + CO + formate + 2 H(+)</text>
        <dbReference type="Rhea" id="RHEA:14161"/>
        <dbReference type="ChEBI" id="CHEBI:15378"/>
        <dbReference type="ChEBI" id="CHEBI:15379"/>
        <dbReference type="ChEBI" id="CHEBI:15740"/>
        <dbReference type="ChEBI" id="CHEBI:17245"/>
        <dbReference type="ChEBI" id="CHEBI:49016"/>
        <dbReference type="ChEBI" id="CHEBI:49252"/>
        <dbReference type="EC" id="1.13.11.53"/>
    </reaction>
</comment>
<comment type="catalytic activity">
    <reaction evidence="1">
        <text>1,2-dihydroxy-5-(methylsulfanyl)pent-1-en-3-one + O2 = 4-methylsulfanyl-2-oxobutanoate + formate + 2 H(+)</text>
        <dbReference type="Rhea" id="RHEA:24504"/>
        <dbReference type="ChEBI" id="CHEBI:15378"/>
        <dbReference type="ChEBI" id="CHEBI:15379"/>
        <dbReference type="ChEBI" id="CHEBI:15740"/>
        <dbReference type="ChEBI" id="CHEBI:16723"/>
        <dbReference type="ChEBI" id="CHEBI:49252"/>
        <dbReference type="EC" id="1.13.11.54"/>
    </reaction>
</comment>
<comment type="cofactor">
    <cofactor evidence="1">
        <name>Fe(2+)</name>
        <dbReference type="ChEBI" id="CHEBI:29033"/>
    </cofactor>
    <text evidence="1">Binds 1 Fe(2+) cation per monomer.</text>
</comment>
<comment type="cofactor">
    <cofactor evidence="1">
        <name>Ni(2+)</name>
        <dbReference type="ChEBI" id="CHEBI:49786"/>
    </cofactor>
    <text evidence="1">Binds 1 nickel ion per monomer.</text>
</comment>
<comment type="pathway">
    <text evidence="1">Amino-acid biosynthesis; L-methionine biosynthesis via salvage pathway; L-methionine from S-methyl-5-thio-alpha-D-ribose 1-phosphate: step 5/6.</text>
</comment>
<comment type="subunit">
    <text evidence="1">Monomer.</text>
</comment>
<comment type="similarity">
    <text evidence="1">Belongs to the acireductone dioxygenase (ARD) family.</text>
</comment>
<accession>B0JUK9</accession>